<protein>
    <recommendedName>
        <fullName evidence="1">Translation initiation factor IF-3</fullName>
    </recommendedName>
</protein>
<dbReference type="EMBL" id="CP000113">
    <property type="protein sequence ID" value="ABF88845.1"/>
    <property type="molecule type" value="Genomic_DNA"/>
</dbReference>
<dbReference type="RefSeq" id="WP_011550712.1">
    <property type="nucleotide sequence ID" value="NC_008095.1"/>
</dbReference>
<dbReference type="SMR" id="Q1DES4"/>
<dbReference type="STRING" id="246197.MXAN_0581"/>
<dbReference type="EnsemblBacteria" id="ABF88845">
    <property type="protein sequence ID" value="ABF88845"/>
    <property type="gene ID" value="MXAN_0581"/>
</dbReference>
<dbReference type="GeneID" id="41358060"/>
<dbReference type="KEGG" id="mxa:MXAN_0581"/>
<dbReference type="eggNOG" id="COG0290">
    <property type="taxonomic scope" value="Bacteria"/>
</dbReference>
<dbReference type="HOGENOM" id="CLU_054919_0_3_7"/>
<dbReference type="OrthoDB" id="9806014at2"/>
<dbReference type="Proteomes" id="UP000002402">
    <property type="component" value="Chromosome"/>
</dbReference>
<dbReference type="GO" id="GO:0005829">
    <property type="term" value="C:cytosol"/>
    <property type="evidence" value="ECO:0007669"/>
    <property type="project" value="TreeGrafter"/>
</dbReference>
<dbReference type="GO" id="GO:0016020">
    <property type="term" value="C:membrane"/>
    <property type="evidence" value="ECO:0007669"/>
    <property type="project" value="TreeGrafter"/>
</dbReference>
<dbReference type="GO" id="GO:0043022">
    <property type="term" value="F:ribosome binding"/>
    <property type="evidence" value="ECO:0007669"/>
    <property type="project" value="TreeGrafter"/>
</dbReference>
<dbReference type="GO" id="GO:0003743">
    <property type="term" value="F:translation initiation factor activity"/>
    <property type="evidence" value="ECO:0007669"/>
    <property type="project" value="UniProtKB-UniRule"/>
</dbReference>
<dbReference type="GO" id="GO:0032790">
    <property type="term" value="P:ribosome disassembly"/>
    <property type="evidence" value="ECO:0007669"/>
    <property type="project" value="TreeGrafter"/>
</dbReference>
<dbReference type="FunFam" id="3.10.20.80:FF:000001">
    <property type="entry name" value="Translation initiation factor IF-3"/>
    <property type="match status" value="1"/>
</dbReference>
<dbReference type="FunFam" id="3.30.110.10:FF:000001">
    <property type="entry name" value="Translation initiation factor IF-3"/>
    <property type="match status" value="1"/>
</dbReference>
<dbReference type="Gene3D" id="3.30.110.10">
    <property type="entry name" value="Translation initiation factor 3 (IF-3), C-terminal domain"/>
    <property type="match status" value="1"/>
</dbReference>
<dbReference type="Gene3D" id="3.10.20.80">
    <property type="entry name" value="Translation initiation factor 3 (IF-3), N-terminal domain"/>
    <property type="match status" value="1"/>
</dbReference>
<dbReference type="HAMAP" id="MF_00080">
    <property type="entry name" value="IF_3"/>
    <property type="match status" value="1"/>
</dbReference>
<dbReference type="InterPro" id="IPR036788">
    <property type="entry name" value="T_IF-3_C_sf"/>
</dbReference>
<dbReference type="InterPro" id="IPR036787">
    <property type="entry name" value="T_IF-3_N_sf"/>
</dbReference>
<dbReference type="InterPro" id="IPR019813">
    <property type="entry name" value="Translation_initiation_fac3_CS"/>
</dbReference>
<dbReference type="InterPro" id="IPR001288">
    <property type="entry name" value="Translation_initiation_fac_3"/>
</dbReference>
<dbReference type="InterPro" id="IPR019815">
    <property type="entry name" value="Translation_initiation_fac_3_C"/>
</dbReference>
<dbReference type="InterPro" id="IPR019814">
    <property type="entry name" value="Translation_initiation_fac_3_N"/>
</dbReference>
<dbReference type="NCBIfam" id="TIGR00168">
    <property type="entry name" value="infC"/>
    <property type="match status" value="1"/>
</dbReference>
<dbReference type="PANTHER" id="PTHR10938">
    <property type="entry name" value="TRANSLATION INITIATION FACTOR IF-3"/>
    <property type="match status" value="1"/>
</dbReference>
<dbReference type="PANTHER" id="PTHR10938:SF0">
    <property type="entry name" value="TRANSLATION INITIATION FACTOR IF-3, MITOCHONDRIAL"/>
    <property type="match status" value="1"/>
</dbReference>
<dbReference type="Pfam" id="PF00707">
    <property type="entry name" value="IF3_C"/>
    <property type="match status" value="1"/>
</dbReference>
<dbReference type="Pfam" id="PF05198">
    <property type="entry name" value="IF3_N"/>
    <property type="match status" value="1"/>
</dbReference>
<dbReference type="SUPFAM" id="SSF55200">
    <property type="entry name" value="Translation initiation factor IF3, C-terminal domain"/>
    <property type="match status" value="1"/>
</dbReference>
<dbReference type="SUPFAM" id="SSF54364">
    <property type="entry name" value="Translation initiation factor IF3, N-terminal domain"/>
    <property type="match status" value="1"/>
</dbReference>
<dbReference type="PROSITE" id="PS00938">
    <property type="entry name" value="IF3"/>
    <property type="match status" value="1"/>
</dbReference>
<comment type="function">
    <text evidence="1">IF-3 binds to the 30S ribosomal subunit and shifts the equilibrium between 70S ribosomes and their 50S and 30S subunits in favor of the free subunits, thus enhancing the availability of 30S subunits on which protein synthesis initiation begins.</text>
</comment>
<comment type="subunit">
    <text evidence="1">Monomer.</text>
</comment>
<comment type="subcellular location">
    <subcellularLocation>
        <location evidence="1">Cytoplasm</location>
    </subcellularLocation>
</comment>
<comment type="similarity">
    <text evidence="1">Belongs to the IF-3 family.</text>
</comment>
<proteinExistence type="inferred from homology"/>
<feature type="chain" id="PRO_1000004545" description="Translation initiation factor IF-3">
    <location>
        <begin position="1"/>
        <end position="247"/>
    </location>
</feature>
<feature type="region of interest" description="Disordered" evidence="2">
    <location>
        <begin position="1"/>
        <end position="20"/>
    </location>
</feature>
<feature type="region of interest" description="Disordered" evidence="2">
    <location>
        <begin position="188"/>
        <end position="247"/>
    </location>
</feature>
<feature type="compositionally biased region" description="Low complexity" evidence="2">
    <location>
        <begin position="207"/>
        <end position="217"/>
    </location>
</feature>
<feature type="compositionally biased region" description="Basic and acidic residues" evidence="2">
    <location>
        <begin position="218"/>
        <end position="232"/>
    </location>
</feature>
<feature type="compositionally biased region" description="Low complexity" evidence="2">
    <location>
        <begin position="233"/>
        <end position="247"/>
    </location>
</feature>
<name>IF3_MYXXD</name>
<organism>
    <name type="scientific">Myxococcus xanthus (strain DK1622)</name>
    <dbReference type="NCBI Taxonomy" id="246197"/>
    <lineage>
        <taxon>Bacteria</taxon>
        <taxon>Pseudomonadati</taxon>
        <taxon>Myxococcota</taxon>
        <taxon>Myxococcia</taxon>
        <taxon>Myxococcales</taxon>
        <taxon>Cystobacterineae</taxon>
        <taxon>Myxococcaceae</taxon>
        <taxon>Myxococcus</taxon>
    </lineage>
</organism>
<gene>
    <name evidence="1" type="primary">infC</name>
    <name type="ordered locus">MXAN_0581</name>
</gene>
<accession>Q1DES4</accession>
<reference key="1">
    <citation type="journal article" date="2006" name="Proc. Natl. Acad. Sci. U.S.A.">
        <title>Evolution of sensory complexity recorded in a myxobacterial genome.</title>
        <authorList>
            <person name="Goldman B.S."/>
            <person name="Nierman W.C."/>
            <person name="Kaiser D."/>
            <person name="Slater S.C."/>
            <person name="Durkin A.S."/>
            <person name="Eisen J.A."/>
            <person name="Ronning C.M."/>
            <person name="Barbazuk W.B."/>
            <person name="Blanchard M."/>
            <person name="Field C."/>
            <person name="Halling C."/>
            <person name="Hinkle G."/>
            <person name="Iartchuk O."/>
            <person name="Kim H.S."/>
            <person name="Mackenzie C."/>
            <person name="Madupu R."/>
            <person name="Miller N."/>
            <person name="Shvartsbeyn A."/>
            <person name="Sullivan S.A."/>
            <person name="Vaudin M."/>
            <person name="Wiegand R."/>
            <person name="Kaplan H.B."/>
        </authorList>
    </citation>
    <scope>NUCLEOTIDE SEQUENCE [LARGE SCALE GENOMIC DNA]</scope>
    <source>
        <strain>DK1622</strain>
    </source>
</reference>
<evidence type="ECO:0000255" key="1">
    <source>
        <dbReference type="HAMAP-Rule" id="MF_00080"/>
    </source>
</evidence>
<evidence type="ECO:0000256" key="2">
    <source>
        <dbReference type="SAM" id="MobiDB-lite"/>
    </source>
</evidence>
<keyword id="KW-0963">Cytoplasm</keyword>
<keyword id="KW-0396">Initiation factor</keyword>
<keyword id="KW-0648">Protein biosynthesis</keyword>
<keyword id="KW-1185">Reference proteome</keyword>
<sequence>MIREQRSSRGGSRDQRTNRRIRAREVRVVGSDGSQLGVMPLEAALDRARTEGLDLVEISPMASPPVCKIMDYGKFKYEEKKKASEAKRAQVTVLLKEVKLRPKTEEHDYEFKVRNTRRFIEDGNKAKVVIQFRGREITHREQGTAILDDVAKDLKDVAVVEQMPRMEGRLMFMILAPTPKVAQKARELVRQAATAAKRPPPPGAPGAGKSAAGASSGAEEKAEETAEEKKEAQAAPAAAEAQSPTAS</sequence>